<proteinExistence type="inferred from homology"/>
<keyword id="KW-0067">ATP-binding</keyword>
<keyword id="KW-0963">Cytoplasm</keyword>
<keyword id="KW-0418">Kinase</keyword>
<keyword id="KW-0460">Magnesium</keyword>
<keyword id="KW-0479">Metal-binding</keyword>
<keyword id="KW-0546">Nucleotide metabolism</keyword>
<keyword id="KW-0547">Nucleotide-binding</keyword>
<keyword id="KW-0597">Phosphoprotein</keyword>
<keyword id="KW-0808">Transferase</keyword>
<feature type="chain" id="PRO_0000136939" description="Nucleoside diphosphate kinase">
    <location>
        <begin position="1"/>
        <end position="148"/>
    </location>
</feature>
<feature type="active site" description="Pros-phosphohistidine intermediate" evidence="1">
    <location>
        <position position="115"/>
    </location>
</feature>
<feature type="binding site" evidence="1">
    <location>
        <position position="9"/>
    </location>
    <ligand>
        <name>ATP</name>
        <dbReference type="ChEBI" id="CHEBI:30616"/>
    </ligand>
</feature>
<feature type="binding site" evidence="1">
    <location>
        <position position="57"/>
    </location>
    <ligand>
        <name>ATP</name>
        <dbReference type="ChEBI" id="CHEBI:30616"/>
    </ligand>
</feature>
<feature type="binding site" evidence="1">
    <location>
        <position position="85"/>
    </location>
    <ligand>
        <name>ATP</name>
        <dbReference type="ChEBI" id="CHEBI:30616"/>
    </ligand>
</feature>
<feature type="binding site" evidence="1">
    <location>
        <position position="91"/>
    </location>
    <ligand>
        <name>ATP</name>
        <dbReference type="ChEBI" id="CHEBI:30616"/>
    </ligand>
</feature>
<feature type="binding site" evidence="1">
    <location>
        <position position="102"/>
    </location>
    <ligand>
        <name>ATP</name>
        <dbReference type="ChEBI" id="CHEBI:30616"/>
    </ligand>
</feature>
<feature type="binding site" evidence="1">
    <location>
        <position position="112"/>
    </location>
    <ligand>
        <name>ATP</name>
        <dbReference type="ChEBI" id="CHEBI:30616"/>
    </ligand>
</feature>
<feature type="modified residue" description="Phosphothreonine" evidence="1">
    <location>
        <position position="91"/>
    </location>
</feature>
<feature type="modified residue" description="Phosphoserine" evidence="1">
    <location>
        <position position="122"/>
    </location>
</feature>
<dbReference type="EC" id="2.7.4.6" evidence="1"/>
<dbReference type="EMBL" id="AE017194">
    <property type="protein sequence ID" value="AAS40571.1"/>
    <property type="status" value="ALT_INIT"/>
    <property type="molecule type" value="Genomic_DNA"/>
</dbReference>
<dbReference type="SMR" id="Q73AY0"/>
<dbReference type="KEGG" id="bca:BCE_1642"/>
<dbReference type="HOGENOM" id="CLU_060216_6_3_9"/>
<dbReference type="Proteomes" id="UP000002527">
    <property type="component" value="Chromosome"/>
</dbReference>
<dbReference type="GO" id="GO:0005737">
    <property type="term" value="C:cytoplasm"/>
    <property type="evidence" value="ECO:0007669"/>
    <property type="project" value="UniProtKB-SubCell"/>
</dbReference>
<dbReference type="GO" id="GO:0005524">
    <property type="term" value="F:ATP binding"/>
    <property type="evidence" value="ECO:0007669"/>
    <property type="project" value="UniProtKB-UniRule"/>
</dbReference>
<dbReference type="GO" id="GO:0046872">
    <property type="term" value="F:metal ion binding"/>
    <property type="evidence" value="ECO:0007669"/>
    <property type="project" value="UniProtKB-KW"/>
</dbReference>
<dbReference type="GO" id="GO:0004550">
    <property type="term" value="F:nucleoside diphosphate kinase activity"/>
    <property type="evidence" value="ECO:0007669"/>
    <property type="project" value="UniProtKB-UniRule"/>
</dbReference>
<dbReference type="GO" id="GO:0006241">
    <property type="term" value="P:CTP biosynthetic process"/>
    <property type="evidence" value="ECO:0007669"/>
    <property type="project" value="UniProtKB-UniRule"/>
</dbReference>
<dbReference type="GO" id="GO:0006183">
    <property type="term" value="P:GTP biosynthetic process"/>
    <property type="evidence" value="ECO:0007669"/>
    <property type="project" value="UniProtKB-UniRule"/>
</dbReference>
<dbReference type="GO" id="GO:0006228">
    <property type="term" value="P:UTP biosynthetic process"/>
    <property type="evidence" value="ECO:0007669"/>
    <property type="project" value="UniProtKB-UniRule"/>
</dbReference>
<dbReference type="CDD" id="cd04413">
    <property type="entry name" value="NDPk_I"/>
    <property type="match status" value="1"/>
</dbReference>
<dbReference type="FunFam" id="3.30.70.141:FF:000002">
    <property type="entry name" value="Nucleoside diphosphate kinase"/>
    <property type="match status" value="1"/>
</dbReference>
<dbReference type="Gene3D" id="3.30.70.141">
    <property type="entry name" value="Nucleoside diphosphate kinase-like domain"/>
    <property type="match status" value="1"/>
</dbReference>
<dbReference type="HAMAP" id="MF_00451">
    <property type="entry name" value="NDP_kinase"/>
    <property type="match status" value="1"/>
</dbReference>
<dbReference type="InterPro" id="IPR034907">
    <property type="entry name" value="NDK-like_dom"/>
</dbReference>
<dbReference type="InterPro" id="IPR036850">
    <property type="entry name" value="NDK-like_dom_sf"/>
</dbReference>
<dbReference type="InterPro" id="IPR001564">
    <property type="entry name" value="Nucleoside_diP_kinase"/>
</dbReference>
<dbReference type="InterPro" id="IPR023005">
    <property type="entry name" value="Nucleoside_diP_kinase_AS"/>
</dbReference>
<dbReference type="NCBIfam" id="NF001908">
    <property type="entry name" value="PRK00668.1"/>
    <property type="match status" value="1"/>
</dbReference>
<dbReference type="PANTHER" id="PTHR11349">
    <property type="entry name" value="NUCLEOSIDE DIPHOSPHATE KINASE"/>
    <property type="match status" value="1"/>
</dbReference>
<dbReference type="Pfam" id="PF00334">
    <property type="entry name" value="NDK"/>
    <property type="match status" value="1"/>
</dbReference>
<dbReference type="PRINTS" id="PR01243">
    <property type="entry name" value="NUCDPKINASE"/>
</dbReference>
<dbReference type="SMART" id="SM00562">
    <property type="entry name" value="NDK"/>
    <property type="match status" value="1"/>
</dbReference>
<dbReference type="SUPFAM" id="SSF54919">
    <property type="entry name" value="Nucleoside diphosphate kinase, NDK"/>
    <property type="match status" value="1"/>
</dbReference>
<dbReference type="PROSITE" id="PS00469">
    <property type="entry name" value="NDPK"/>
    <property type="match status" value="1"/>
</dbReference>
<dbReference type="PROSITE" id="PS51374">
    <property type="entry name" value="NDPK_LIKE"/>
    <property type="match status" value="1"/>
</dbReference>
<reference key="1">
    <citation type="journal article" date="2004" name="Nucleic Acids Res.">
        <title>The genome sequence of Bacillus cereus ATCC 10987 reveals metabolic adaptations and a large plasmid related to Bacillus anthracis pXO1.</title>
        <authorList>
            <person name="Rasko D.A."/>
            <person name="Ravel J."/>
            <person name="Oekstad O.A."/>
            <person name="Helgason E."/>
            <person name="Cer R.Z."/>
            <person name="Jiang L."/>
            <person name="Shores K.A."/>
            <person name="Fouts D.E."/>
            <person name="Tourasse N.J."/>
            <person name="Angiuoli S.V."/>
            <person name="Kolonay J.F."/>
            <person name="Nelson W.C."/>
            <person name="Kolstoe A.-B."/>
            <person name="Fraser C.M."/>
            <person name="Read T.D."/>
        </authorList>
    </citation>
    <scope>NUCLEOTIDE SEQUENCE [LARGE SCALE GENOMIC DNA]</scope>
    <source>
        <strain>ATCC 10987 / NRS 248</strain>
    </source>
</reference>
<evidence type="ECO:0000255" key="1">
    <source>
        <dbReference type="HAMAP-Rule" id="MF_00451"/>
    </source>
</evidence>
<evidence type="ECO:0000305" key="2"/>
<accession>Q73AY0</accession>
<organism>
    <name type="scientific">Bacillus cereus (strain ATCC 10987 / NRS 248)</name>
    <dbReference type="NCBI Taxonomy" id="222523"/>
    <lineage>
        <taxon>Bacteria</taxon>
        <taxon>Bacillati</taxon>
        <taxon>Bacillota</taxon>
        <taxon>Bacilli</taxon>
        <taxon>Bacillales</taxon>
        <taxon>Bacillaceae</taxon>
        <taxon>Bacillus</taxon>
        <taxon>Bacillus cereus group</taxon>
    </lineage>
</organism>
<sequence length="148" mass="16615">MEKTFLMVKPDGVQRAFIGEIVARFEKKGFQLVGAKLMQVTPEIAGQHYAEHTEKPFFGELVDFITSGPVFAMVWQGEGVVDTARNMMGKTRPHEAAPGTIRGDFGVTVAKNIIHGSDSLESAEREIAIFFKEEELVDYSKLMNEWIY</sequence>
<protein>
    <recommendedName>
        <fullName evidence="1">Nucleoside diphosphate kinase</fullName>
        <shortName evidence="1">NDK</shortName>
        <shortName evidence="1">NDP kinase</shortName>
        <ecNumber evidence="1">2.7.4.6</ecNumber>
    </recommendedName>
    <alternativeName>
        <fullName evidence="1">Nucleoside-2-P kinase</fullName>
    </alternativeName>
</protein>
<gene>
    <name evidence="1" type="primary">ndk</name>
    <name type="ordered locus">BCE_1642</name>
</gene>
<comment type="function">
    <text evidence="1">Major role in the synthesis of nucleoside triphosphates other than ATP. The ATP gamma phosphate is transferred to the NDP beta phosphate via a ping-pong mechanism, using a phosphorylated active-site intermediate.</text>
</comment>
<comment type="catalytic activity">
    <reaction evidence="1">
        <text>a 2'-deoxyribonucleoside 5'-diphosphate + ATP = a 2'-deoxyribonucleoside 5'-triphosphate + ADP</text>
        <dbReference type="Rhea" id="RHEA:44640"/>
        <dbReference type="ChEBI" id="CHEBI:30616"/>
        <dbReference type="ChEBI" id="CHEBI:61560"/>
        <dbReference type="ChEBI" id="CHEBI:73316"/>
        <dbReference type="ChEBI" id="CHEBI:456216"/>
        <dbReference type="EC" id="2.7.4.6"/>
    </reaction>
</comment>
<comment type="catalytic activity">
    <reaction evidence="1">
        <text>a ribonucleoside 5'-diphosphate + ATP = a ribonucleoside 5'-triphosphate + ADP</text>
        <dbReference type="Rhea" id="RHEA:18113"/>
        <dbReference type="ChEBI" id="CHEBI:30616"/>
        <dbReference type="ChEBI" id="CHEBI:57930"/>
        <dbReference type="ChEBI" id="CHEBI:61557"/>
        <dbReference type="ChEBI" id="CHEBI:456216"/>
        <dbReference type="EC" id="2.7.4.6"/>
    </reaction>
</comment>
<comment type="cofactor">
    <cofactor evidence="1">
        <name>Mg(2+)</name>
        <dbReference type="ChEBI" id="CHEBI:18420"/>
    </cofactor>
</comment>
<comment type="subunit">
    <text evidence="1">Homotetramer.</text>
</comment>
<comment type="subcellular location">
    <subcellularLocation>
        <location evidence="1">Cytoplasm</location>
    </subcellularLocation>
</comment>
<comment type="similarity">
    <text evidence="1">Belongs to the NDK family.</text>
</comment>
<comment type="sequence caution" evidence="2">
    <conflict type="erroneous initiation">
        <sequence resource="EMBL-CDS" id="AAS40571"/>
    </conflict>
</comment>
<name>NDK_BACC1</name>